<dbReference type="EC" id="3.1.26.-" evidence="4"/>
<dbReference type="EMBL" id="X14235">
    <property type="protein sequence ID" value="CAA32451.1"/>
    <property type="molecule type" value="Genomic_DNA"/>
</dbReference>
<dbReference type="EMBL" id="L10328">
    <property type="protein sequence ID" value="AAA61997.1"/>
    <property type="molecule type" value="Genomic_DNA"/>
</dbReference>
<dbReference type="EMBL" id="U00096">
    <property type="protein sequence ID" value="AAC76668.1"/>
    <property type="molecule type" value="Genomic_DNA"/>
</dbReference>
<dbReference type="EMBL" id="AP009048">
    <property type="protein sequence ID" value="BAE77649.1"/>
    <property type="molecule type" value="Genomic_DNA"/>
</dbReference>
<dbReference type="PIR" id="F65165">
    <property type="entry name" value="F65165"/>
</dbReference>
<dbReference type="RefSeq" id="NP_418101.1">
    <property type="nucleotide sequence ID" value="NC_000913.3"/>
</dbReference>
<dbReference type="RefSeq" id="WP_000621340.1">
    <property type="nucleotide sequence ID" value="NZ_SSZK01000022.1"/>
</dbReference>
<dbReference type="PDB" id="8HVJ">
    <property type="method" value="X-ray"/>
    <property type="resolution" value="4.05 A"/>
    <property type="chains" value="A/B/C=1-287"/>
</dbReference>
<dbReference type="PDB" id="8VER">
    <property type="method" value="X-ray"/>
    <property type="resolution" value="2.80 A"/>
    <property type="chains" value="A/B/C/D/E/F=1-287"/>
</dbReference>
<dbReference type="PDB" id="8VES">
    <property type="method" value="EM"/>
    <property type="resolution" value="3.22 A"/>
    <property type="chains" value="A/B/C/D/E/F=1-287"/>
</dbReference>
<dbReference type="PDBsum" id="8HVJ"/>
<dbReference type="PDBsum" id="8VER"/>
<dbReference type="PDBsum" id="8VES"/>
<dbReference type="EMDB" id="EMD-43173"/>
<dbReference type="SMR" id="P23839"/>
<dbReference type="BioGRID" id="4261234">
    <property type="interactions" value="32"/>
</dbReference>
<dbReference type="DIP" id="DIP-12428N"/>
<dbReference type="FunCoup" id="P23839">
    <property type="interactions" value="312"/>
</dbReference>
<dbReference type="IntAct" id="P23839">
    <property type="interactions" value="13"/>
</dbReference>
<dbReference type="STRING" id="511145.b3644"/>
<dbReference type="jPOST" id="P23839"/>
<dbReference type="PaxDb" id="511145-b3644"/>
<dbReference type="DNASU" id="948154"/>
<dbReference type="EnsemblBacteria" id="AAC76668">
    <property type="protein sequence ID" value="AAC76668"/>
    <property type="gene ID" value="b3644"/>
</dbReference>
<dbReference type="GeneID" id="948154"/>
<dbReference type="KEGG" id="ecj:JW3619"/>
<dbReference type="KEGG" id="eco:b3644"/>
<dbReference type="KEGG" id="ecoc:C3026_19745"/>
<dbReference type="PATRIC" id="fig|511145.12.peg.3764"/>
<dbReference type="EchoBASE" id="EB1178"/>
<dbReference type="eggNOG" id="COG1561">
    <property type="taxonomic scope" value="Bacteria"/>
</dbReference>
<dbReference type="HOGENOM" id="CLU_076609_0_0_6"/>
<dbReference type="InParanoid" id="P23839"/>
<dbReference type="OMA" id="INREVNT"/>
<dbReference type="OrthoDB" id="9771229at2"/>
<dbReference type="PhylomeDB" id="P23839"/>
<dbReference type="BioCyc" id="EcoCyc:EG11192-MONOMER"/>
<dbReference type="PRO" id="PR:P23839"/>
<dbReference type="Proteomes" id="UP000000625">
    <property type="component" value="Chromosome"/>
</dbReference>
<dbReference type="GO" id="GO:0005829">
    <property type="term" value="C:cytosol"/>
    <property type="evidence" value="ECO:0000314"/>
    <property type="project" value="EcoCyc"/>
</dbReference>
<dbReference type="GO" id="GO:0016891">
    <property type="term" value="F:RNA endonuclease activity, producing 5'-phosphomonoesters"/>
    <property type="evidence" value="ECO:0000314"/>
    <property type="project" value="UniProtKB"/>
</dbReference>
<dbReference type="GO" id="GO:0006401">
    <property type="term" value="P:RNA catabolic process"/>
    <property type="evidence" value="ECO:0000315"/>
    <property type="project" value="EcoCyc"/>
</dbReference>
<dbReference type="InterPro" id="IPR013551">
    <property type="entry name" value="YicC-like_C"/>
</dbReference>
<dbReference type="InterPro" id="IPR013527">
    <property type="entry name" value="YicC-like_N"/>
</dbReference>
<dbReference type="InterPro" id="IPR005229">
    <property type="entry name" value="YicC/YloC-like"/>
</dbReference>
<dbReference type="NCBIfam" id="TIGR00255">
    <property type="entry name" value="YicC/YloC family endoribonuclease"/>
    <property type="match status" value="1"/>
</dbReference>
<dbReference type="PANTHER" id="PTHR30636">
    <property type="entry name" value="UPF0701 PROTEIN YICC"/>
    <property type="match status" value="1"/>
</dbReference>
<dbReference type="PANTHER" id="PTHR30636:SF3">
    <property type="entry name" value="UPF0701 PROTEIN YICC"/>
    <property type="match status" value="1"/>
</dbReference>
<dbReference type="Pfam" id="PF08340">
    <property type="entry name" value="YicC-like_C"/>
    <property type="match status" value="1"/>
</dbReference>
<dbReference type="Pfam" id="PF03755">
    <property type="entry name" value="YicC-like_N"/>
    <property type="match status" value="1"/>
</dbReference>
<reference key="1">
    <citation type="journal article" date="1989" name="Mol. Microbiol.">
        <title>Molecular and mutational analysis of three genes preceding pyrE on the Escherichia coli chromosome.</title>
        <authorList>
            <person name="Poulsen P."/>
            <person name="Andersen J.T."/>
            <person name="Jensen K.F."/>
        </authorList>
    </citation>
    <scope>NUCLEOTIDE SEQUENCE [GENOMIC DNA]</scope>
    <source>
        <strain>K12</strain>
    </source>
</reference>
<reference key="2">
    <citation type="journal article" date="1993" name="Genomics">
        <title>DNA sequence and analysis of 136 kilobases of the Escherichia coli genome: organizational symmetry around the origin of replication.</title>
        <authorList>
            <person name="Burland V.D."/>
            <person name="Plunkett G. III"/>
            <person name="Daniels D.L."/>
            <person name="Blattner F.R."/>
        </authorList>
    </citation>
    <scope>NUCLEOTIDE SEQUENCE [LARGE SCALE GENOMIC DNA]</scope>
    <source>
        <strain>K12 / MG1655 / ATCC 47076</strain>
    </source>
</reference>
<reference key="3">
    <citation type="journal article" date="1997" name="Science">
        <title>The complete genome sequence of Escherichia coli K-12.</title>
        <authorList>
            <person name="Blattner F.R."/>
            <person name="Plunkett G. III"/>
            <person name="Bloch C.A."/>
            <person name="Perna N.T."/>
            <person name="Burland V."/>
            <person name="Riley M."/>
            <person name="Collado-Vides J."/>
            <person name="Glasner J.D."/>
            <person name="Rode C.K."/>
            <person name="Mayhew G.F."/>
            <person name="Gregor J."/>
            <person name="Davis N.W."/>
            <person name="Kirkpatrick H.A."/>
            <person name="Goeden M.A."/>
            <person name="Rose D.J."/>
            <person name="Mau B."/>
            <person name="Shao Y."/>
        </authorList>
    </citation>
    <scope>NUCLEOTIDE SEQUENCE [LARGE SCALE GENOMIC DNA]</scope>
    <source>
        <strain>K12 / MG1655 / ATCC 47076</strain>
    </source>
</reference>
<reference key="4">
    <citation type="journal article" date="2006" name="Mol. Syst. Biol.">
        <title>Highly accurate genome sequences of Escherichia coli K-12 strains MG1655 and W3110.</title>
        <authorList>
            <person name="Hayashi K."/>
            <person name="Morooka N."/>
            <person name="Yamamoto Y."/>
            <person name="Fujita K."/>
            <person name="Isono K."/>
            <person name="Choi S."/>
            <person name="Ohtsubo E."/>
            <person name="Baba T."/>
            <person name="Wanner B.L."/>
            <person name="Mori H."/>
            <person name="Horiuchi T."/>
        </authorList>
    </citation>
    <scope>NUCLEOTIDE SEQUENCE [LARGE SCALE GENOMIC DNA]</scope>
    <source>
        <strain>K12 / W3110 / ATCC 27325 / DSM 5911</strain>
    </source>
</reference>
<reference key="5">
    <citation type="journal article" date="1991" name="Res. Microbiol.">
        <title>Three genes preceding pyrE on the Escherichia coli chromosome are essential for survival and normal cell morphology in stationary culture and at high temperature.</title>
        <authorList>
            <person name="Poulsen P."/>
            <person name="Jensen K.F."/>
        </authorList>
    </citation>
    <scope>DISRUPTION PHENOTYPE</scope>
    <scope>IMPORTANCE AT HIGH TEMPERATURE</scope>
    <source>
        <strain>K12 / MC4100 / ATCC 35695 / DSM 6574</strain>
    </source>
</reference>
<reference key="6">
    <citation type="journal article" date="1997" name="Electrophoresis">
        <title>Escherichia coli proteome analysis using the gene-protein database.</title>
        <authorList>
            <person name="VanBogelen R.A."/>
            <person name="Abshire K.Z."/>
            <person name="Moldover B."/>
            <person name="Olson E.R."/>
            <person name="Neidhardt F.C."/>
        </authorList>
    </citation>
    <scope>IDENTIFICATION BY 2D-GEL</scope>
</reference>
<reference key="7">
    <citation type="journal article" date="2021" name="Proc. Natl. Acad. Sci. U.S.A.">
        <title>A fluorescence-based genetic screen reveals diverse mechanisms silencing small RNA signaling in E. coli.</title>
        <authorList>
            <person name="Chen J."/>
            <person name="To L."/>
            <person name="de Mets F."/>
            <person name="Luo X."/>
            <person name="Majdalani N."/>
            <person name="Tai C.H."/>
            <person name="Gottesman S."/>
        </authorList>
    </citation>
    <scope>FUNCTION</scope>
    <scope>SUBUNIT</scope>
    <scope>DISRUPTION PHENOTYPE</scope>
    <source>
        <strain>K12 / MG1655 / ATCC 47076</strain>
    </source>
</reference>
<reference key="8">
    <citation type="journal article" date="2022" name="RNA">
        <title>Discovery and initial characterization of YloC, a novel endoribonuclease in Bacillus subtilis.</title>
        <authorList>
            <person name="Ingle S."/>
            <person name="Chhabra S."/>
            <person name="Chen J."/>
            <person name="Lazarus M.B."/>
            <person name="Luo X."/>
            <person name="Bechhofer D.H."/>
        </authorList>
    </citation>
    <scope>FUNCTION AS AN ENDORIBONUCLEASE</scope>
    <scope>SUBUNIT</scope>
    <scope>DISRUPTION PHENOTYPE</scope>
    <source>
        <strain>K12 / DH5-alpha</strain>
    </source>
</reference>
<protein>
    <recommendedName>
        <fullName evidence="6">Endoribonuclease YicC</fullName>
        <ecNumber evidence="4">3.1.26.-</ecNumber>
    </recommendedName>
</protein>
<comment type="function">
    <text evidence="3 4">Contributes to degradation of small RNA (sRNA) RhyB. Upon overexpression suppresses sRNA-mediated RhyB-silencing of multiple RNA targets but not other sRNA's targets; overexpression leads to loss of RhyB sRNA. Enables degradation of RhyB by 3' to 5' exoribonuclease PNPase (pnp) (PubMed:34210798). Endonucleolytically cleaves ssRNA, probably generating a 3'-OH and a 5'-phosphate group (PubMed:34815358).</text>
</comment>
<comment type="cofactor">
    <cofactor evidence="1">
        <name>a divalent metal cation</name>
        <dbReference type="ChEBI" id="CHEBI:60240"/>
    </cofactor>
</comment>
<comment type="subunit">
    <text evidence="8 9">Might interact with PNPase (pnp).</text>
</comment>
<comment type="disruption phenotype">
    <text evidence="2 3">A double yicC-dniD deletion in rich medium makes filamentous cells with little DNA in stationary phase, has no growth defect in minimal medium, does not grow at 45 degrees Celsius (PubMed:1925027). Slight decrease in suppression of RhyB-silencing of a sodB reporter construct (PubMed:34210798).</text>
</comment>
<comment type="similarity">
    <text evidence="7">Belongs to the YicC/YloC family.</text>
</comment>
<gene>
    <name type="primary">yicC</name>
    <name evidence="5" type="synonym">orfX</name>
    <name type="ordered locus">b3644</name>
    <name type="ordered locus">JW3619</name>
</gene>
<name>YICC_ECOLI</name>
<proteinExistence type="evidence at protein level"/>
<feature type="chain" id="PRO_0000169613" description="Endoribonuclease YicC">
    <location>
        <begin position="1"/>
        <end position="287"/>
    </location>
</feature>
<feature type="sequence conflict" description="In Ref. 1; CAA32451." evidence="7" ref="1">
    <original>E</original>
    <variation>Q</variation>
    <location>
        <position position="148"/>
    </location>
</feature>
<feature type="sequence conflict" description="In Ref. 1; CAA32451." evidence="7" ref="1">
    <original>RLVAKL</original>
    <variation>SGREV</variation>
    <location>
        <begin position="184"/>
        <end position="189"/>
    </location>
</feature>
<feature type="strand" evidence="10">
    <location>
        <begin position="7"/>
        <end position="14"/>
    </location>
</feature>
<feature type="strand" evidence="10">
    <location>
        <begin position="16"/>
        <end position="27"/>
    </location>
</feature>
<feature type="strand" evidence="10">
    <location>
        <begin position="30"/>
        <end position="37"/>
    </location>
</feature>
<feature type="helix" evidence="10">
    <location>
        <begin position="43"/>
        <end position="45"/>
    </location>
</feature>
<feature type="helix" evidence="10">
    <location>
        <begin position="46"/>
        <end position="56"/>
    </location>
</feature>
<feature type="strand" evidence="10">
    <location>
        <begin position="59"/>
        <end position="70"/>
    </location>
</feature>
<feature type="helix" evidence="10">
    <location>
        <begin position="82"/>
        <end position="99"/>
    </location>
</feature>
<feature type="helix" evidence="10">
    <location>
        <begin position="106"/>
        <end position="110"/>
    </location>
</feature>
<feature type="turn" evidence="11">
    <location>
        <begin position="113"/>
        <end position="115"/>
    </location>
</feature>
<feature type="strand" evidence="11">
    <location>
        <begin position="120"/>
        <end position="122"/>
    </location>
</feature>
<feature type="helix" evidence="10">
    <location>
        <begin position="123"/>
        <end position="191"/>
    </location>
</feature>
<feature type="helix" evidence="10">
    <location>
        <begin position="199"/>
        <end position="212"/>
    </location>
</feature>
<feature type="helix" evidence="10">
    <location>
        <begin position="215"/>
        <end position="232"/>
    </location>
</feature>
<feature type="helix" evidence="10">
    <location>
        <begin position="239"/>
        <end position="259"/>
    </location>
</feature>
<feature type="helix" evidence="10">
    <location>
        <begin position="263"/>
        <end position="283"/>
    </location>
</feature>
<keyword id="KW-0002">3D-structure</keyword>
<keyword id="KW-0255">Endonuclease</keyword>
<keyword id="KW-0378">Hydrolase</keyword>
<keyword id="KW-0540">Nuclease</keyword>
<keyword id="KW-1185">Reference proteome</keyword>
<organism>
    <name type="scientific">Escherichia coli (strain K12)</name>
    <dbReference type="NCBI Taxonomy" id="83333"/>
    <lineage>
        <taxon>Bacteria</taxon>
        <taxon>Pseudomonadati</taxon>
        <taxon>Pseudomonadota</taxon>
        <taxon>Gammaproteobacteria</taxon>
        <taxon>Enterobacterales</taxon>
        <taxon>Enterobacteriaceae</taxon>
        <taxon>Escherichia</taxon>
    </lineage>
</organism>
<sequence>MIRSMTAYARREIKGEWGSATWEMRSVNQRYLETYFRLPEQFRSLEPVVRERIRSRLTRGKVECTLRYEPDVSAQGELILNEKLAKQLVTAANWVKMQSDEGEINPVDILRWPGVMAAQEQDLDAIAAEILAALDGTLDDFIVARETEGQALKALIEQRLEGVTAEVVKVRSHMPEILQWQRERLVAKLEDAQVQLENNRLEQELVLLAQRIDVAEELDRLEAHVKETYNILKKKEAVGRRLDFMMQEFNRESNTLASKSINAEVTNSAIELKVLIEQMREQIQNIE</sequence>
<accession>P23839</accession>
<accession>Q2M7V7</accession>
<evidence type="ECO:0000250" key="1">
    <source>
        <dbReference type="UniProtKB" id="O34441"/>
    </source>
</evidence>
<evidence type="ECO:0000269" key="2">
    <source>
    </source>
</evidence>
<evidence type="ECO:0000269" key="3">
    <source>
    </source>
</evidence>
<evidence type="ECO:0000269" key="4">
    <source>
    </source>
</evidence>
<evidence type="ECO:0000303" key="5">
    <source>
    </source>
</evidence>
<evidence type="ECO:0000303" key="6">
    <source>
    </source>
</evidence>
<evidence type="ECO:0000305" key="7"/>
<evidence type="ECO:0000305" key="8">
    <source>
    </source>
</evidence>
<evidence type="ECO:0000305" key="9">
    <source>
    </source>
</evidence>
<evidence type="ECO:0007829" key="10">
    <source>
        <dbReference type="PDB" id="8VER"/>
    </source>
</evidence>
<evidence type="ECO:0007829" key="11">
    <source>
        <dbReference type="PDB" id="8VES"/>
    </source>
</evidence>